<evidence type="ECO:0000250" key="1">
    <source>
        <dbReference type="UniProtKB" id="Q5FVR2"/>
    </source>
</evidence>
<evidence type="ECO:0000256" key="2">
    <source>
        <dbReference type="SAM" id="MobiDB-lite"/>
    </source>
</evidence>
<evidence type="ECO:0000269" key="3">
    <source>
    </source>
</evidence>
<evidence type="ECO:0000269" key="4">
    <source>
    </source>
</evidence>
<evidence type="ECO:0000269" key="5">
    <source>
    </source>
</evidence>
<evidence type="ECO:0000269" key="6">
    <source>
    </source>
</evidence>
<evidence type="ECO:0000269" key="7">
    <source>
    </source>
</evidence>
<evidence type="ECO:0000269" key="8">
    <source>
    </source>
</evidence>
<evidence type="ECO:0000269" key="9">
    <source>
    </source>
</evidence>
<evidence type="ECO:0000269" key="10">
    <source>
    </source>
</evidence>
<evidence type="ECO:0000303" key="11">
    <source ref="3"/>
</evidence>
<evidence type="ECO:0000305" key="12"/>
<evidence type="ECO:0000305" key="13">
    <source>
    </source>
</evidence>
<evidence type="ECO:0000312" key="14">
    <source>
        <dbReference type="HGNC" id="HGNC:3148"/>
    </source>
</evidence>
<evidence type="ECO:0007829" key="15">
    <source>
        <dbReference type="PDB" id="1UOU"/>
    </source>
</evidence>
<evidence type="ECO:0007829" key="16">
    <source>
        <dbReference type="PDB" id="2J0F"/>
    </source>
</evidence>
<evidence type="ECO:0007829" key="17">
    <source>
        <dbReference type="PDB" id="2WK5"/>
    </source>
</evidence>
<name>TYPH_HUMAN</name>
<protein>
    <recommendedName>
        <fullName evidence="12">Thymidine phosphorylase</fullName>
        <shortName>TP</shortName>
        <ecNumber evidence="6">2.4.2.4</ecNumber>
    </recommendedName>
    <alternativeName>
        <fullName>Gliostatin</fullName>
    </alternativeName>
    <alternativeName>
        <fullName>Platelet-derived endothelial cell growth factor</fullName>
        <shortName>PD-ECGF</shortName>
    </alternativeName>
    <alternativeName>
        <fullName>TdRPase</fullName>
    </alternativeName>
</protein>
<reference key="1">
    <citation type="journal article" date="1989" name="Nature">
        <title>Identification of angiogenic activity and the cloning and expression of platelet-derived endothelial cell growth factor.</title>
        <authorList>
            <person name="Ishikawa F."/>
            <person name="Miyazono K."/>
            <person name="Hellman U."/>
            <person name="Drexler H."/>
            <person name="Wernstedt C."/>
            <person name="Hagiwara K."/>
            <person name="Usuki K."/>
            <person name="Takaku F."/>
            <person name="Risau W."/>
            <person name="Heldin C.-H."/>
        </authorList>
    </citation>
    <scope>NUCLEOTIDE SEQUENCE [MRNA] (ISOFORM 1)</scope>
    <scope>PARTIAL PROTEIN SEQUENCE</scope>
    <scope>VARIANT LEU-471</scope>
    <source>
        <tissue>Placenta</tissue>
    </source>
</reference>
<reference key="2">
    <citation type="journal article" date="1992" name="Yeast">
        <title>Expression of recombinant platelet-derived endothelial cell growth factor in the yeast Saccharomyces cerevisiae.</title>
        <authorList>
            <person name="Finnis C."/>
            <person name="Goodey A."/>
            <person name="Courtney M."/>
            <person name="Sleep D."/>
        </authorList>
    </citation>
    <scope>NUCLEOTIDE SEQUENCE [MRNA] (ISOFORM 1)</scope>
</reference>
<reference key="3">
    <citation type="submission" date="2006-07" db="EMBL/GenBank/DDBJ databases">
        <authorList>
            <person name="Suzuki Y."/>
            <person name="Sugano S."/>
            <person name="Totoki Y."/>
            <person name="Toyoda A."/>
            <person name="Takeda T."/>
            <person name="Sakaki Y."/>
            <person name="Tanaka A."/>
            <person name="Yokoyama S."/>
        </authorList>
    </citation>
    <scope>NUCLEOTIDE SEQUENCE [LARGE SCALE MRNA] (ISOFORM 2)</scope>
    <source>
        <tissue>Dermoid cancer</tissue>
    </source>
</reference>
<reference key="4">
    <citation type="journal article" date="1999" name="Nature">
        <title>The DNA sequence of human chromosome 22.</title>
        <authorList>
            <person name="Dunham I."/>
            <person name="Hunt A.R."/>
            <person name="Collins J.E."/>
            <person name="Bruskiewich R."/>
            <person name="Beare D.M."/>
            <person name="Clamp M."/>
            <person name="Smink L.J."/>
            <person name="Ainscough R."/>
            <person name="Almeida J.P."/>
            <person name="Babbage A.K."/>
            <person name="Bagguley C."/>
            <person name="Bailey J."/>
            <person name="Barlow K.F."/>
            <person name="Bates K.N."/>
            <person name="Beasley O.P."/>
            <person name="Bird C.P."/>
            <person name="Blakey S.E."/>
            <person name="Bridgeman A.M."/>
            <person name="Buck D."/>
            <person name="Burgess J."/>
            <person name="Burrill W.D."/>
            <person name="Burton J."/>
            <person name="Carder C."/>
            <person name="Carter N.P."/>
            <person name="Chen Y."/>
            <person name="Clark G."/>
            <person name="Clegg S.M."/>
            <person name="Cobley V.E."/>
            <person name="Cole C.G."/>
            <person name="Collier R.E."/>
            <person name="Connor R."/>
            <person name="Conroy D."/>
            <person name="Corby N.R."/>
            <person name="Coville G.J."/>
            <person name="Cox A.V."/>
            <person name="Davis J."/>
            <person name="Dawson E."/>
            <person name="Dhami P.D."/>
            <person name="Dockree C."/>
            <person name="Dodsworth S.J."/>
            <person name="Durbin R.M."/>
            <person name="Ellington A.G."/>
            <person name="Evans K.L."/>
            <person name="Fey J.M."/>
            <person name="Fleming K."/>
            <person name="French L."/>
            <person name="Garner A.A."/>
            <person name="Gilbert J.G.R."/>
            <person name="Goward M.E."/>
            <person name="Grafham D.V."/>
            <person name="Griffiths M.N.D."/>
            <person name="Hall C."/>
            <person name="Hall R.E."/>
            <person name="Hall-Tamlyn G."/>
            <person name="Heathcott R.W."/>
            <person name="Ho S."/>
            <person name="Holmes S."/>
            <person name="Hunt S.E."/>
            <person name="Jones M.C."/>
            <person name="Kershaw J."/>
            <person name="Kimberley A.M."/>
            <person name="King A."/>
            <person name="Laird G.K."/>
            <person name="Langford C.F."/>
            <person name="Leversha M.A."/>
            <person name="Lloyd C."/>
            <person name="Lloyd D.M."/>
            <person name="Martyn I.D."/>
            <person name="Mashreghi-Mohammadi M."/>
            <person name="Matthews L.H."/>
            <person name="Mccann O.T."/>
            <person name="Mcclay J."/>
            <person name="Mclaren S."/>
            <person name="McMurray A.A."/>
            <person name="Milne S.A."/>
            <person name="Mortimore B.J."/>
            <person name="Odell C.N."/>
            <person name="Pavitt R."/>
            <person name="Pearce A.V."/>
            <person name="Pearson D."/>
            <person name="Phillimore B.J.C.T."/>
            <person name="Phillips S.H."/>
            <person name="Plumb R.W."/>
            <person name="Ramsay H."/>
            <person name="Ramsey Y."/>
            <person name="Rogers L."/>
            <person name="Ross M.T."/>
            <person name="Scott C.E."/>
            <person name="Sehra H.K."/>
            <person name="Skuce C.D."/>
            <person name="Smalley S."/>
            <person name="Smith M.L."/>
            <person name="Soderlund C."/>
            <person name="Spragon L."/>
            <person name="Steward C.A."/>
            <person name="Sulston J.E."/>
            <person name="Swann R.M."/>
            <person name="Vaudin M."/>
            <person name="Wall M."/>
            <person name="Wallis J.M."/>
            <person name="Whiteley M.N."/>
            <person name="Willey D.L."/>
            <person name="Williams L."/>
            <person name="Williams S.A."/>
            <person name="Williamson H."/>
            <person name="Wilmer T.E."/>
            <person name="Wilming L."/>
            <person name="Wright C.L."/>
            <person name="Hubbard T."/>
            <person name="Bentley D.R."/>
            <person name="Beck S."/>
            <person name="Rogers J."/>
            <person name="Shimizu N."/>
            <person name="Minoshima S."/>
            <person name="Kawasaki K."/>
            <person name="Sasaki T."/>
            <person name="Asakawa S."/>
            <person name="Kudoh J."/>
            <person name="Shintani A."/>
            <person name="Shibuya K."/>
            <person name="Yoshizaki Y."/>
            <person name="Aoki N."/>
            <person name="Mitsuyama S."/>
            <person name="Roe B.A."/>
            <person name="Chen F."/>
            <person name="Chu L."/>
            <person name="Crabtree J."/>
            <person name="Deschamps S."/>
            <person name="Do A."/>
            <person name="Do T."/>
            <person name="Dorman A."/>
            <person name="Fang F."/>
            <person name="Fu Y."/>
            <person name="Hu P."/>
            <person name="Hua A."/>
            <person name="Kenton S."/>
            <person name="Lai H."/>
            <person name="Lao H.I."/>
            <person name="Lewis J."/>
            <person name="Lewis S."/>
            <person name="Lin S.-P."/>
            <person name="Loh P."/>
            <person name="Malaj E."/>
            <person name="Nguyen T."/>
            <person name="Pan H."/>
            <person name="Phan S."/>
            <person name="Qi S."/>
            <person name="Qian Y."/>
            <person name="Ray L."/>
            <person name="Ren Q."/>
            <person name="Shaull S."/>
            <person name="Sloan D."/>
            <person name="Song L."/>
            <person name="Wang Q."/>
            <person name="Wang Y."/>
            <person name="Wang Z."/>
            <person name="White J."/>
            <person name="Willingham D."/>
            <person name="Wu H."/>
            <person name="Yao Z."/>
            <person name="Zhan M."/>
            <person name="Zhang G."/>
            <person name="Chissoe S."/>
            <person name="Murray J."/>
            <person name="Miller N."/>
            <person name="Minx P."/>
            <person name="Fulton R."/>
            <person name="Johnson D."/>
            <person name="Bemis G."/>
            <person name="Bentley D."/>
            <person name="Bradshaw H."/>
            <person name="Bourne S."/>
            <person name="Cordes M."/>
            <person name="Du Z."/>
            <person name="Fulton L."/>
            <person name="Goela D."/>
            <person name="Graves T."/>
            <person name="Hawkins J."/>
            <person name="Hinds K."/>
            <person name="Kemp K."/>
            <person name="Latreille P."/>
            <person name="Layman D."/>
            <person name="Ozersky P."/>
            <person name="Rohlfing T."/>
            <person name="Scheet P."/>
            <person name="Walker C."/>
            <person name="Wamsley A."/>
            <person name="Wohldmann P."/>
            <person name="Pepin K."/>
            <person name="Nelson J."/>
            <person name="Korf I."/>
            <person name="Bedell J.A."/>
            <person name="Hillier L.W."/>
            <person name="Mardis E."/>
            <person name="Waterston R."/>
            <person name="Wilson R."/>
            <person name="Emanuel B.S."/>
            <person name="Shaikh T."/>
            <person name="Kurahashi H."/>
            <person name="Saitta S."/>
            <person name="Budarf M.L."/>
            <person name="McDermid H.E."/>
            <person name="Johnson A."/>
            <person name="Wong A.C.C."/>
            <person name="Morrow B.E."/>
            <person name="Edelmann L."/>
            <person name="Kim U.J."/>
            <person name="Shizuya H."/>
            <person name="Simon M.I."/>
            <person name="Dumanski J.P."/>
            <person name="Peyrard M."/>
            <person name="Kedra D."/>
            <person name="Seroussi E."/>
            <person name="Fransson I."/>
            <person name="Tapia I."/>
            <person name="Bruder C.E."/>
            <person name="O'Brien K.P."/>
            <person name="Wilkinson P."/>
            <person name="Bodenteich A."/>
            <person name="Hartman K."/>
            <person name="Hu X."/>
            <person name="Khan A.S."/>
            <person name="Lane L."/>
            <person name="Tilahun Y."/>
            <person name="Wright H."/>
        </authorList>
    </citation>
    <scope>NUCLEOTIDE SEQUENCE [LARGE SCALE GENOMIC DNA]</scope>
</reference>
<reference key="5">
    <citation type="journal article" date="2004" name="Genome Res.">
        <title>The status, quality, and expansion of the NIH full-length cDNA project: the Mammalian Gene Collection (MGC).</title>
        <authorList>
            <consortium name="The MGC Project Team"/>
        </authorList>
    </citation>
    <scope>NUCLEOTIDE SEQUENCE [LARGE SCALE MRNA] (ISOFORM 1)</scope>
    <scope>VARIANT LEU-471</scope>
    <source>
        <tissue>Brain</tissue>
        <tissue>Lung</tissue>
    </source>
</reference>
<reference key="6">
    <citation type="journal article" date="1992" name="Nature">
        <title>Angiogenic factor.</title>
        <authorList>
            <person name="Furukawa T."/>
            <person name="Yoshimura A."/>
            <person name="Sumizawa T."/>
            <person name="Haraguchi M."/>
            <person name="Akiyama S."/>
            <person name="Fukui K."/>
            <person name="Yamada Y."/>
        </authorList>
    </citation>
    <scope>NUCLEOTIDE SEQUENCE OF 149-244</scope>
    <scope>PROTEIN SEQUENCE OF 125-178 AND 236-244</scope>
</reference>
<reference key="7">
    <citation type="journal article" date="1992" name="J. Biol. Chem.">
        <title>Neurotrophic action of gliostatin on cortical neurons. Identity of gliostatin and platelet-derived endothelial cell growth factor.</title>
        <authorList>
            <person name="Asai K."/>
            <person name="Nakanishi K."/>
            <person name="Isobe I."/>
            <person name="Eksioglu Y.Z."/>
            <person name="Hirano A."/>
            <person name="Hama K."/>
            <person name="Miyamoto T."/>
            <person name="Kato T."/>
        </authorList>
    </citation>
    <scope>PARTIAL PROTEIN SEQUENCE</scope>
</reference>
<reference key="8">
    <citation type="journal article" date="1992" name="Biochem. Biophys. Res. Commun.">
        <title>Platelet-derived endothelial cell growth factor has thymidine phosphorylase activity.</title>
        <authorList>
            <person name="Usuki K."/>
            <person name="Saras J."/>
            <person name="Waltenberger J."/>
            <person name="Miyazono K."/>
            <person name="Pierce G."/>
            <person name="Thomason A."/>
            <person name="Heldin C.-H."/>
        </authorList>
    </citation>
    <scope>FUNCTION</scope>
    <scope>CATALYTIC ACTIVITY</scope>
</reference>
<reference key="9">
    <citation type="journal article" date="2011" name="BMC Syst. Biol.">
        <title>Initial characterization of the human central proteome.</title>
        <authorList>
            <person name="Burkard T.R."/>
            <person name="Planyavsky M."/>
            <person name="Kaupe I."/>
            <person name="Breitwieser F.P."/>
            <person name="Buerckstuemmer T."/>
            <person name="Bennett K.L."/>
            <person name="Superti-Furga G."/>
            <person name="Colinge J."/>
        </authorList>
    </citation>
    <scope>IDENTIFICATION BY MASS SPECTROMETRY [LARGE SCALE ANALYSIS]</scope>
</reference>
<reference key="10">
    <citation type="journal article" date="2014" name="J. Proteomics">
        <title>An enzyme assisted RP-RPLC approach for in-depth analysis of human liver phosphoproteome.</title>
        <authorList>
            <person name="Bian Y."/>
            <person name="Song C."/>
            <person name="Cheng K."/>
            <person name="Dong M."/>
            <person name="Wang F."/>
            <person name="Huang J."/>
            <person name="Sun D."/>
            <person name="Wang L."/>
            <person name="Ye M."/>
            <person name="Zou H."/>
        </authorList>
    </citation>
    <scope>IDENTIFICATION BY MASS SPECTROMETRY [LARGE SCALE ANALYSIS]</scope>
    <source>
        <tissue>Liver</tissue>
    </source>
</reference>
<reference key="11">
    <citation type="journal article" date="2004" name="Structure">
        <title>Crystal structure of human thymidine phosphorylase in complex with a small molecule inhibitor.</title>
        <authorList>
            <person name="Norman R.A."/>
            <person name="Barry S.T."/>
            <person name="Bate M."/>
            <person name="Breed J."/>
            <person name="Colls J.G."/>
            <person name="Ernill R.J."/>
            <person name="Luke R.W."/>
            <person name="Minshull C.A."/>
            <person name="McAlister M.S."/>
            <person name="McCall E.J."/>
            <person name="McMiken H.H."/>
            <person name="Paterson D.S."/>
            <person name="Timms D."/>
            <person name="Tucker J.A."/>
            <person name="Pauptit R.A."/>
        </authorList>
    </citation>
    <scope>X-RAY CRYSTALLOGRAPHY (2.11 ANGSTROMS) OF 12-482 IN COMPLEX WITH INHIBITOR</scope>
    <scope>SUBUNIT</scope>
</reference>
<reference key="12">
    <citation type="journal article" date="2006" name="Biochem. J.">
        <title>Structural basis for non-competitive product inhibition in human thymidine phosphorylase: implications for drug design.</title>
        <authorList>
            <person name="El Omari K."/>
            <person name="Bronckaers A."/>
            <person name="Liekens S."/>
            <person name="Perez-Perez M.J."/>
            <person name="Balzarini J."/>
            <person name="Stammers D.K."/>
        </authorList>
    </citation>
    <scope>X-RAY CRYSTALLOGRAPHY (2.31 ANGSTROMS)</scope>
    <scope>SUBUNIT</scope>
</reference>
<reference key="13">
    <citation type="journal article" date="2009" name="Biochem. Biophys. Res. Commun.">
        <title>Structures of native human thymidine phosphorylase and in complex with 5-iodouracil.</title>
        <authorList>
            <person name="Mitsiki E."/>
            <person name="Papageorgiou A.C."/>
            <person name="Iyer S."/>
            <person name="Thiyagarajan N."/>
            <person name="Prior S.H."/>
            <person name="Sleep D."/>
            <person name="Finnis C."/>
            <person name="Acharya K.R."/>
        </authorList>
    </citation>
    <scope>X-RAY CRYSTALLOGRAPHY (2.5 ANGSTROMS) ALONE AND IN COMPLEX WITH 5-IODOURACIL</scope>
    <scope>SUBSTRATE-BINDING SITES</scope>
    <scope>MUTAGENESIS OF TYR-199</scope>
</reference>
<reference key="14">
    <citation type="journal article" date="1999" name="Science">
        <title>Thymidine phosphorylase gene mutations in MNGIE, a human mitochondrial disorder.</title>
        <authorList>
            <person name="Nishino I."/>
            <person name="Spinazzola A."/>
            <person name="Hirano M."/>
        </authorList>
    </citation>
    <scope>VARIANTS MTDPS1 ARG-145; SER-153; ARG-222; ALA-289 AND 397-LEU-ALA-398 DEL</scope>
</reference>
<reference key="15">
    <citation type="journal article" date="2002" name="Neurology">
        <title>Phenotypic variability in a Spanish family with MNGIE.</title>
        <authorList>
            <person name="Gamez J."/>
            <person name="Ferreiro C."/>
            <person name="Accarino M.L."/>
            <person name="Guarner L."/>
            <person name="Tadesse S."/>
            <person name="Marti R.A."/>
            <person name="Andreu A.L."/>
            <person name="Raguer N."/>
            <person name="Cervera C."/>
            <person name="Hirano M."/>
        </authorList>
    </citation>
    <scope>VARIANT MTDPS1 GLN-44</scope>
</reference>
<keyword id="KW-0002">3D-structure</keyword>
<keyword id="KW-0025">Alternative splicing</keyword>
<keyword id="KW-0037">Angiogenesis</keyword>
<keyword id="KW-0145">Chemotaxis</keyword>
<keyword id="KW-0217">Developmental protein</keyword>
<keyword id="KW-0221">Differentiation</keyword>
<keyword id="KW-0903">Direct protein sequencing</keyword>
<keyword id="KW-0225">Disease variant</keyword>
<keyword id="KW-0328">Glycosyltransferase</keyword>
<keyword id="KW-0339">Growth factor</keyword>
<keyword id="KW-0622">Neuropathy</keyword>
<keyword id="KW-0597">Phosphoprotein</keyword>
<keyword id="KW-1274">Primary mitochondrial disease</keyword>
<keyword id="KW-0935">Progressive external ophthalmoplegia</keyword>
<keyword id="KW-1267">Proteomics identification</keyword>
<keyword id="KW-1185">Reference proteome</keyword>
<keyword id="KW-0677">Repeat</keyword>
<keyword id="KW-0808">Transferase</keyword>
<sequence>MAALMTPGTGAPPAPGDFSGEGSQGLPDPSPEPKQLPELIRMKRDGGRLSEADIRGFVAAVVNGSAQGAQIGAMLMAIRLRGMDLEETSVLTQALAQSGQQLEWPEAWRQQLVDKHSTGGVGDKVSLVLAPALAACGCKVPMISGRGLGHTGGTLDKLESIPGFNVIQSPEQMQVLLDQAGCCIVGQSEQLVPADGILYAARDVTATVDSLPLITASILSKKLVEGLSALVVDVKFGGAAVFPNQEQARELAKTLVGVGASLGLRVAAALTAMDKPLGRCVGHALEVEEALLCMDGAGPPDLRDLVTTLGGALLWLSGHAGTQAQGAARVAAALDDGSALGRFERMLAAQGVDPGLARALCSGSPAERRQLLPRAREQEELLAPADGTVELVRALPLALVLHELGAGRSRAGEPLRLGVGAELLVDVGQRLRRGTPWLRVHRDGPALSGPQSRALQEALVLSDRAPFAAPSPFAELVLPPQQ</sequence>
<dbReference type="EC" id="2.4.2.4" evidence="6"/>
<dbReference type="EMBL" id="M63193">
    <property type="protein sequence ID" value="AAA60043.1"/>
    <property type="molecule type" value="mRNA"/>
</dbReference>
<dbReference type="EMBL" id="AK225269">
    <property type="status" value="NOT_ANNOTATED_CDS"/>
    <property type="molecule type" value="mRNA"/>
</dbReference>
<dbReference type="EMBL" id="U62317">
    <property type="protein sequence ID" value="AAB03344.2"/>
    <property type="molecule type" value="Genomic_DNA"/>
</dbReference>
<dbReference type="EMBL" id="BC018160">
    <property type="protein sequence ID" value="AAH18160.1"/>
    <property type="molecule type" value="mRNA"/>
</dbReference>
<dbReference type="EMBL" id="BC052211">
    <property type="protein sequence ID" value="AAH52211.1"/>
    <property type="molecule type" value="mRNA"/>
</dbReference>
<dbReference type="CCDS" id="CCDS14096.1">
    <molecule id="P19971-1"/>
</dbReference>
<dbReference type="CCDS" id="CCDS58811.1">
    <molecule id="P19971-2"/>
</dbReference>
<dbReference type="PIR" id="S03904">
    <property type="entry name" value="S03904"/>
</dbReference>
<dbReference type="RefSeq" id="NP_001107227.1">
    <molecule id="P19971-1"/>
    <property type="nucleotide sequence ID" value="NM_001113755.3"/>
</dbReference>
<dbReference type="RefSeq" id="NP_001107228.1">
    <molecule id="P19971-1"/>
    <property type="nucleotide sequence ID" value="NM_001113756.3"/>
</dbReference>
<dbReference type="RefSeq" id="NP_001244917.1">
    <molecule id="P19971-1"/>
    <property type="nucleotide sequence ID" value="NM_001257988.1"/>
</dbReference>
<dbReference type="RefSeq" id="NP_001244918.1">
    <molecule id="P19971-2"/>
    <property type="nucleotide sequence ID" value="NM_001257989.1"/>
</dbReference>
<dbReference type="RefSeq" id="NP_001944.1">
    <molecule id="P19971-1"/>
    <property type="nucleotide sequence ID" value="NM_001953.5"/>
</dbReference>
<dbReference type="PDB" id="1UOU">
    <property type="method" value="X-ray"/>
    <property type="resolution" value="2.11 A"/>
    <property type="chains" value="A=12-482"/>
</dbReference>
<dbReference type="PDB" id="2J0F">
    <property type="method" value="X-ray"/>
    <property type="resolution" value="2.31 A"/>
    <property type="chains" value="A/B/C/D=1-482"/>
</dbReference>
<dbReference type="PDB" id="2WK5">
    <property type="method" value="X-ray"/>
    <property type="resolution" value="2.99 A"/>
    <property type="chains" value="A/B/C/D=1-482"/>
</dbReference>
<dbReference type="PDB" id="2WK6">
    <property type="method" value="X-ray"/>
    <property type="resolution" value="2.50 A"/>
    <property type="chains" value="A/B=1-482"/>
</dbReference>
<dbReference type="PDBsum" id="1UOU"/>
<dbReference type="PDBsum" id="2J0F"/>
<dbReference type="PDBsum" id="2WK5"/>
<dbReference type="PDBsum" id="2WK6"/>
<dbReference type="SMR" id="P19971"/>
<dbReference type="BioGRID" id="108219">
    <property type="interactions" value="125"/>
</dbReference>
<dbReference type="CORUM" id="P19971"/>
<dbReference type="FunCoup" id="P19971">
    <property type="interactions" value="342"/>
</dbReference>
<dbReference type="IntAct" id="P19971">
    <property type="interactions" value="72"/>
</dbReference>
<dbReference type="STRING" id="9606.ENSP00000379038"/>
<dbReference type="BindingDB" id="P19971"/>
<dbReference type="ChEMBL" id="CHEMBL3106"/>
<dbReference type="DrugBank" id="DB01101">
    <property type="generic name" value="Capecitabine"/>
</dbReference>
<dbReference type="DrugBank" id="DB00369">
    <property type="generic name" value="Cidofovir"/>
</dbReference>
<dbReference type="DrugBank" id="DB00322">
    <property type="generic name" value="Floxuridine"/>
</dbReference>
<dbReference type="DrugBank" id="DB00544">
    <property type="generic name" value="Fluorouracil"/>
</dbReference>
<dbReference type="DrugBank" id="DB06433">
    <property type="generic name" value="Tezacitabine"/>
</dbReference>
<dbReference type="DrugBank" id="DB03462">
    <property type="generic name" value="Thymine"/>
</dbReference>
<dbReference type="DrugBank" id="DB09343">
    <property type="generic name" value="Tipiracil"/>
</dbReference>
<dbReference type="DrugBank" id="DB00432">
    <property type="generic name" value="Trifluridine"/>
</dbReference>
<dbReference type="DrugBank" id="DB02745">
    <property type="generic name" value="Uridine"/>
</dbReference>
<dbReference type="DrugCentral" id="P19971"/>
<dbReference type="MoonDB" id="P19971">
    <property type="type" value="Curated"/>
</dbReference>
<dbReference type="MoonProt" id="P19971"/>
<dbReference type="GlyGen" id="P19971">
    <property type="glycosylation" value="1 site, 1 O-linked glycan (1 site)"/>
</dbReference>
<dbReference type="iPTMnet" id="P19971"/>
<dbReference type="PhosphoSitePlus" id="P19971"/>
<dbReference type="SwissPalm" id="P19971"/>
<dbReference type="BioMuta" id="TYMP"/>
<dbReference type="DMDM" id="67477361"/>
<dbReference type="OGP" id="P19971"/>
<dbReference type="jPOST" id="P19971"/>
<dbReference type="MassIVE" id="P19971"/>
<dbReference type="PaxDb" id="9606-ENSP00000379038"/>
<dbReference type="PeptideAtlas" id="P19971"/>
<dbReference type="PRIDE" id="P19971"/>
<dbReference type="ProteomicsDB" id="46247"/>
<dbReference type="ProteomicsDB" id="53705">
    <molecule id="P19971-1"/>
</dbReference>
<dbReference type="Pumba" id="P19971"/>
<dbReference type="Antibodypedia" id="253">
    <property type="antibodies" value="891 antibodies from 36 providers"/>
</dbReference>
<dbReference type="DNASU" id="1890"/>
<dbReference type="Ensembl" id="ENST00000252029.8">
    <molecule id="P19971-1"/>
    <property type="protein sequence ID" value="ENSP00000252029.3"/>
    <property type="gene ID" value="ENSG00000025708.14"/>
</dbReference>
<dbReference type="Ensembl" id="ENST00000395678.7">
    <molecule id="P19971-1"/>
    <property type="protein sequence ID" value="ENSP00000379036.3"/>
    <property type="gene ID" value="ENSG00000025708.14"/>
</dbReference>
<dbReference type="Ensembl" id="ENST00000395680.6">
    <molecule id="P19971-1"/>
    <property type="protein sequence ID" value="ENSP00000379037.1"/>
    <property type="gene ID" value="ENSG00000025708.14"/>
</dbReference>
<dbReference type="Ensembl" id="ENST00000395681.6">
    <molecule id="P19971-2"/>
    <property type="protein sequence ID" value="ENSP00000379038.1"/>
    <property type="gene ID" value="ENSG00000025708.14"/>
</dbReference>
<dbReference type="Ensembl" id="ENST00000487577.5">
    <molecule id="P19971-1"/>
    <property type="protein sequence ID" value="ENSP00000498844.1"/>
    <property type="gene ID" value="ENSG00000025708.14"/>
</dbReference>
<dbReference type="GeneID" id="1890"/>
<dbReference type="KEGG" id="hsa:1890"/>
<dbReference type="MANE-Select" id="ENST00000252029.8">
    <property type="protein sequence ID" value="ENSP00000252029.3"/>
    <property type="RefSeq nucleotide sequence ID" value="NM_001953.5"/>
    <property type="RefSeq protein sequence ID" value="NP_001944.1"/>
</dbReference>
<dbReference type="UCSC" id="uc003bmb.7">
    <molecule id="P19971-1"/>
    <property type="organism name" value="human"/>
</dbReference>
<dbReference type="AGR" id="HGNC:3148"/>
<dbReference type="CTD" id="1890"/>
<dbReference type="DisGeNET" id="1890"/>
<dbReference type="GeneCards" id="TYMP"/>
<dbReference type="GeneReviews" id="TYMP"/>
<dbReference type="HGNC" id="HGNC:3148">
    <property type="gene designation" value="TYMP"/>
</dbReference>
<dbReference type="HPA" id="ENSG00000025708">
    <property type="expression patterns" value="Low tissue specificity"/>
</dbReference>
<dbReference type="MalaCards" id="TYMP"/>
<dbReference type="MIM" id="131222">
    <property type="type" value="gene"/>
</dbReference>
<dbReference type="MIM" id="603041">
    <property type="type" value="phenotype"/>
</dbReference>
<dbReference type="neXtProt" id="NX_P19971"/>
<dbReference type="OpenTargets" id="ENSG00000025708"/>
<dbReference type="Orphanet" id="298">
    <property type="disease" value="Mitochondrial neurogastrointestinal encephalomyopathy"/>
</dbReference>
<dbReference type="PharmGKB" id="PA162407502"/>
<dbReference type="VEuPathDB" id="HostDB:ENSG00000025708"/>
<dbReference type="eggNOG" id="ENOG502QPRY">
    <property type="taxonomic scope" value="Eukaryota"/>
</dbReference>
<dbReference type="GeneTree" id="ENSGT00390000009250"/>
<dbReference type="HOGENOM" id="CLU_025040_0_2_1"/>
<dbReference type="InParanoid" id="P19971"/>
<dbReference type="OMA" id="VWGGATN"/>
<dbReference type="OrthoDB" id="445007at2759"/>
<dbReference type="PAN-GO" id="P19971">
    <property type="GO annotations" value="1 GO annotation based on evolutionary models"/>
</dbReference>
<dbReference type="PhylomeDB" id="P19971"/>
<dbReference type="TreeFam" id="TF332198"/>
<dbReference type="BioCyc" id="MetaCyc:HS00442-MONOMER"/>
<dbReference type="BRENDA" id="2.4.2.4">
    <property type="organism ID" value="2681"/>
</dbReference>
<dbReference type="PathwayCommons" id="P19971"/>
<dbReference type="Reactome" id="R-HSA-73614">
    <property type="pathway name" value="Pyrimidine salvage"/>
</dbReference>
<dbReference type="Reactome" id="R-HSA-73621">
    <property type="pathway name" value="Pyrimidine catabolism"/>
</dbReference>
<dbReference type="SABIO-RK" id="P19971"/>
<dbReference type="SignaLink" id="P19971"/>
<dbReference type="UniPathway" id="UPA00578">
    <property type="reaction ID" value="UER00638"/>
</dbReference>
<dbReference type="BioGRID-ORCS" id="1890">
    <property type="hits" value="8 hits in 1158 CRISPR screens"/>
</dbReference>
<dbReference type="ChiTaRS" id="TYMP">
    <property type="organism name" value="human"/>
</dbReference>
<dbReference type="EvolutionaryTrace" id="P19971"/>
<dbReference type="GeneWiki" id="ECGF1"/>
<dbReference type="GenomeRNAi" id="1890"/>
<dbReference type="Pharos" id="P19971">
    <property type="development level" value="Tclin"/>
</dbReference>
<dbReference type="PRO" id="PR:P19971"/>
<dbReference type="Proteomes" id="UP000005640">
    <property type="component" value="Chromosome 22"/>
</dbReference>
<dbReference type="RNAct" id="P19971">
    <property type="molecule type" value="protein"/>
</dbReference>
<dbReference type="Bgee" id="ENSG00000025708">
    <property type="expression patterns" value="Expressed in right uterine tube and 168 other cell types or tissues"/>
</dbReference>
<dbReference type="ExpressionAtlas" id="P19971">
    <property type="expression patterns" value="baseline and differential"/>
</dbReference>
<dbReference type="GO" id="GO:0005829">
    <property type="term" value="C:cytosol"/>
    <property type="evidence" value="ECO:0000318"/>
    <property type="project" value="GO_Central"/>
</dbReference>
<dbReference type="GO" id="GO:0004645">
    <property type="term" value="F:1,4-alpha-oligoglucan phosphorylase activity"/>
    <property type="evidence" value="ECO:0007669"/>
    <property type="project" value="InterPro"/>
</dbReference>
<dbReference type="GO" id="GO:0008083">
    <property type="term" value="F:growth factor activity"/>
    <property type="evidence" value="ECO:0007669"/>
    <property type="project" value="UniProtKB-KW"/>
</dbReference>
<dbReference type="GO" id="GO:0042803">
    <property type="term" value="F:protein homodimerization activity"/>
    <property type="evidence" value="ECO:0000314"/>
    <property type="project" value="CAFA"/>
</dbReference>
<dbReference type="GO" id="GO:0009032">
    <property type="term" value="F:thymidine phosphorylase activity"/>
    <property type="evidence" value="ECO:0000314"/>
    <property type="project" value="CAFA"/>
</dbReference>
<dbReference type="GO" id="GO:0001525">
    <property type="term" value="P:angiogenesis"/>
    <property type="evidence" value="ECO:0007669"/>
    <property type="project" value="UniProtKB-KW"/>
</dbReference>
<dbReference type="GO" id="GO:0030154">
    <property type="term" value="P:cell differentiation"/>
    <property type="evidence" value="ECO:0007669"/>
    <property type="project" value="UniProtKB-KW"/>
</dbReference>
<dbReference type="GO" id="GO:0006935">
    <property type="term" value="P:chemotaxis"/>
    <property type="evidence" value="ECO:0007669"/>
    <property type="project" value="UniProtKB-KW"/>
</dbReference>
<dbReference type="GO" id="GO:0046074">
    <property type="term" value="P:dTMP catabolic process"/>
    <property type="evidence" value="ECO:0007669"/>
    <property type="project" value="Ensembl"/>
</dbReference>
<dbReference type="GO" id="GO:0000002">
    <property type="term" value="P:mitochondrial genome maintenance"/>
    <property type="evidence" value="ECO:0000315"/>
    <property type="project" value="CAFA"/>
</dbReference>
<dbReference type="GO" id="GO:0006206">
    <property type="term" value="P:pyrimidine nucleobase metabolic process"/>
    <property type="evidence" value="ECO:0007669"/>
    <property type="project" value="InterPro"/>
</dbReference>
<dbReference type="GO" id="GO:0006213">
    <property type="term" value="P:pyrimidine nucleoside metabolic process"/>
    <property type="evidence" value="ECO:0000314"/>
    <property type="project" value="CAFA"/>
</dbReference>
<dbReference type="GO" id="GO:1905333">
    <property type="term" value="P:regulation of gastric motility"/>
    <property type="evidence" value="ECO:0000315"/>
    <property type="project" value="CAFA"/>
</dbReference>
<dbReference type="GO" id="GO:0031641">
    <property type="term" value="P:regulation of myelination"/>
    <property type="evidence" value="ECO:0000315"/>
    <property type="project" value="CAFA"/>
</dbReference>
<dbReference type="GO" id="GO:0051969">
    <property type="term" value="P:regulation of transmission of nerve impulse"/>
    <property type="evidence" value="ECO:0000315"/>
    <property type="project" value="CAFA"/>
</dbReference>
<dbReference type="FunFam" id="3.40.1030.10:FF:000003">
    <property type="entry name" value="Pyrimidine-nucleoside phosphorylase"/>
    <property type="match status" value="1"/>
</dbReference>
<dbReference type="FunFam" id="1.20.970.10:FF:000011">
    <property type="entry name" value="Thymidine phosphorylase"/>
    <property type="match status" value="1"/>
</dbReference>
<dbReference type="FunFam" id="3.90.1170.30:FF:000003">
    <property type="entry name" value="Thymidine phosphorylase"/>
    <property type="match status" value="1"/>
</dbReference>
<dbReference type="Gene3D" id="3.40.1030.10">
    <property type="entry name" value="Nucleoside phosphorylase/phosphoribosyltransferase catalytic domain"/>
    <property type="match status" value="1"/>
</dbReference>
<dbReference type="Gene3D" id="3.90.1170.30">
    <property type="entry name" value="Pyrimidine nucleoside phosphorylase-like, C-terminal domain"/>
    <property type="match status" value="1"/>
</dbReference>
<dbReference type="Gene3D" id="1.20.970.10">
    <property type="entry name" value="Transferase, Pyrimidine Nucleoside Phosphorylase, Chain C"/>
    <property type="match status" value="1"/>
</dbReference>
<dbReference type="InterPro" id="IPR000312">
    <property type="entry name" value="Glycosyl_Trfase_fam3"/>
</dbReference>
<dbReference type="InterPro" id="IPR017459">
    <property type="entry name" value="Glycosyl_Trfase_fam3_N_dom"/>
</dbReference>
<dbReference type="InterPro" id="IPR036320">
    <property type="entry name" value="Glycosyl_Trfase_fam3_N_dom_sf"/>
</dbReference>
<dbReference type="InterPro" id="IPR035902">
    <property type="entry name" value="Nuc_phospho_transferase"/>
</dbReference>
<dbReference type="InterPro" id="IPR036566">
    <property type="entry name" value="PYNP-like_C_sf"/>
</dbReference>
<dbReference type="InterPro" id="IPR013102">
    <property type="entry name" value="PYNP_C"/>
</dbReference>
<dbReference type="InterPro" id="IPR018090">
    <property type="entry name" value="Pyrmidine_PPas_bac/euk"/>
</dbReference>
<dbReference type="InterPro" id="IPR017872">
    <property type="entry name" value="Pyrmidine_PPase_CS"/>
</dbReference>
<dbReference type="InterPro" id="IPR000053">
    <property type="entry name" value="Thymidine/pyrmidine_PPase"/>
</dbReference>
<dbReference type="NCBIfam" id="NF004490">
    <property type="entry name" value="PRK05820.1"/>
    <property type="match status" value="1"/>
</dbReference>
<dbReference type="NCBIfam" id="TIGR02644">
    <property type="entry name" value="Y_phosphoryl"/>
    <property type="match status" value="1"/>
</dbReference>
<dbReference type="PANTHER" id="PTHR10515">
    <property type="entry name" value="THYMIDINE PHOSPHORYLASE"/>
    <property type="match status" value="1"/>
</dbReference>
<dbReference type="PANTHER" id="PTHR10515:SF0">
    <property type="entry name" value="THYMIDINE PHOSPHORYLASE"/>
    <property type="match status" value="1"/>
</dbReference>
<dbReference type="Pfam" id="PF02885">
    <property type="entry name" value="Glycos_trans_3N"/>
    <property type="match status" value="1"/>
</dbReference>
<dbReference type="Pfam" id="PF00591">
    <property type="entry name" value="Glycos_transf_3"/>
    <property type="match status" value="1"/>
</dbReference>
<dbReference type="Pfam" id="PF07831">
    <property type="entry name" value="PYNP_C"/>
    <property type="match status" value="1"/>
</dbReference>
<dbReference type="PIRSF" id="PIRSF000478">
    <property type="entry name" value="TP_PyNP"/>
    <property type="match status" value="1"/>
</dbReference>
<dbReference type="SMART" id="SM00941">
    <property type="entry name" value="PYNP_C"/>
    <property type="match status" value="1"/>
</dbReference>
<dbReference type="SUPFAM" id="SSF52418">
    <property type="entry name" value="Nucleoside phosphorylase/phosphoribosyltransferase catalytic domain"/>
    <property type="match status" value="1"/>
</dbReference>
<dbReference type="SUPFAM" id="SSF47648">
    <property type="entry name" value="Nucleoside phosphorylase/phosphoribosyltransferase N-terminal domain"/>
    <property type="match status" value="1"/>
</dbReference>
<dbReference type="SUPFAM" id="SSF54680">
    <property type="entry name" value="Pyrimidine nucleoside phosphorylase C-terminal domain"/>
    <property type="match status" value="1"/>
</dbReference>
<dbReference type="PROSITE" id="PS00647">
    <property type="entry name" value="THYMID_PHOSPHORYLASE"/>
    <property type="match status" value="1"/>
</dbReference>
<organism>
    <name type="scientific">Homo sapiens</name>
    <name type="common">Human</name>
    <dbReference type="NCBI Taxonomy" id="9606"/>
    <lineage>
        <taxon>Eukaryota</taxon>
        <taxon>Metazoa</taxon>
        <taxon>Chordata</taxon>
        <taxon>Craniata</taxon>
        <taxon>Vertebrata</taxon>
        <taxon>Euteleostomi</taxon>
        <taxon>Mammalia</taxon>
        <taxon>Eutheria</taxon>
        <taxon>Euarchontoglires</taxon>
        <taxon>Primates</taxon>
        <taxon>Haplorrhini</taxon>
        <taxon>Catarrhini</taxon>
        <taxon>Hominidae</taxon>
        <taxon>Homo</taxon>
    </lineage>
</organism>
<comment type="function">
    <text evidence="6">May have a role in maintaining the integrity of the blood vessels. Has growth promoting activity on endothelial cells, angiogenic activity in vivo and chemotactic activity on endothelial cells in vitro.</text>
</comment>
<comment type="function">
    <text evidence="6">Catalyzes the reversible phosphorolysis of thymidine. The produced molecules are then utilized as carbon and energy sources or in the rescue of pyrimidine bases for nucleotide synthesis.</text>
</comment>
<comment type="catalytic activity">
    <reaction evidence="6">
        <text>thymidine + phosphate = 2-deoxy-alpha-D-ribose 1-phosphate + thymine</text>
        <dbReference type="Rhea" id="RHEA:16037"/>
        <dbReference type="ChEBI" id="CHEBI:17748"/>
        <dbReference type="ChEBI" id="CHEBI:17821"/>
        <dbReference type="ChEBI" id="CHEBI:43474"/>
        <dbReference type="ChEBI" id="CHEBI:57259"/>
        <dbReference type="EC" id="2.4.2.4"/>
    </reaction>
    <physiologicalReaction direction="left-to-right" evidence="13">
        <dbReference type="Rhea" id="RHEA:16038"/>
    </physiologicalReaction>
</comment>
<comment type="pathway">
    <text evidence="6">Pyrimidine metabolism; dTMP biosynthesis via salvage pathway; dTMP from thymine: step 1/2.</text>
</comment>
<comment type="subunit">
    <text evidence="4 7 8">Homodimer.</text>
</comment>
<comment type="interaction">
    <interactant intactId="EBI-2556931">
        <id>P19971</id>
    </interactant>
    <interactant intactId="EBI-6165891">
        <id>Q14696</id>
        <label>MESD</label>
    </interactant>
    <organismsDiffer>false</organismsDiffer>
    <experiments>3</experiments>
</comment>
<comment type="interaction">
    <interactant intactId="EBI-2556931">
        <id>P19971</id>
    </interactant>
    <interactant intactId="EBI-12030590">
        <id>Q9H0C1</id>
        <label>ZMYND12</label>
    </interactant>
    <organismsDiffer>false</organismsDiffer>
    <experiments>3</experiments>
</comment>
<comment type="alternative products">
    <event type="alternative splicing"/>
    <isoform>
        <id>P19971-1</id>
        <name>1</name>
        <sequence type="displayed"/>
    </isoform>
    <isoform>
        <id>P19971-2</id>
        <name>2</name>
        <sequence type="described" ref="VSP_045556"/>
    </isoform>
</comment>
<comment type="disease" evidence="3 10">
    <disease id="DI-01984">
        <name>Mitochondrial DNA depletion syndrome 1, MNGIE type</name>
        <acronym>MTDPS1</acronym>
        <description>A multisystem disease associated with mitochondrial dysfunction. It is clinically characterized by onset between the second and fifth decades of life, ptosis, progressive external ophthalmoplegia, gastrointestinal dysmotility (often pseudoobstruction), diffuse leukoencephalopathy, cachexia, peripheral neuropathy, and myopathy.</description>
        <dbReference type="MIM" id="603041"/>
    </disease>
    <text>The disease is caused by variants affecting the gene represented in this entry.</text>
</comment>
<comment type="similarity">
    <text evidence="12">Belongs to the thymidine/pyrimidine-nucleoside phosphorylase family.</text>
</comment>
<comment type="online information" name="Atlas of Genetics and Cytogenetics in Oncology and Haematology">
    <link uri="https://atlasgeneticsoncology.org/gene/40397/TYMP"/>
</comment>
<feature type="propeptide" id="PRO_0000035874">
    <location>
        <begin position="1"/>
        <end position="10"/>
    </location>
</feature>
<feature type="chain" id="PRO_0000035875" description="Thymidine phosphorylase">
    <location>
        <begin position="11"/>
        <end position="482"/>
    </location>
</feature>
<feature type="repeat" description="R-V-A-A-A-L-X(5,6)-L-G-R">
    <location>
        <begin position="265"/>
        <end position="279"/>
    </location>
</feature>
<feature type="repeat" description="R-V-A-A-A-L-X(5,6)-L-G-R">
    <location>
        <begin position="329"/>
        <end position="342"/>
    </location>
</feature>
<feature type="repeat" description="R-A-L-X-X-A-L-V-L">
    <location>
        <begin position="393"/>
        <end position="401"/>
    </location>
</feature>
<feature type="repeat" description="R-A-L-X-X-A-L-V-L">
    <location>
        <begin position="453"/>
        <end position="461"/>
    </location>
</feature>
<feature type="region of interest" description="Disordered" evidence="2">
    <location>
        <begin position="1"/>
        <end position="36"/>
    </location>
</feature>
<feature type="binding site">
    <location>
        <position position="116"/>
    </location>
    <ligand>
        <name>substrate</name>
    </ligand>
</feature>
<feature type="binding site">
    <location>
        <position position="202"/>
    </location>
    <ligand>
        <name>substrate</name>
    </ligand>
</feature>
<feature type="binding site">
    <location>
        <position position="217"/>
    </location>
    <ligand>
        <name>substrate</name>
    </ligand>
</feature>
<feature type="binding site">
    <location>
        <position position="221"/>
    </location>
    <ligand>
        <name>substrate</name>
    </ligand>
</feature>
<feature type="modified residue" description="Phosphothreonine" evidence="1">
    <location>
        <position position="6"/>
    </location>
</feature>
<feature type="splice variant" id="VSP_045556" description="In isoform 2." evidence="11">
    <original>D</original>
    <variation>DAPLPA</variation>
    <location>
        <position position="386"/>
    </location>
</feature>
<feature type="sequence variant" id="VAR_016777" description="In MTDPS1; dbSNP:rs28931613." evidence="3">
    <original>R</original>
    <variation>Q</variation>
    <location>
        <position position="44"/>
    </location>
</feature>
<feature type="sequence variant" id="VAR_007643" description="In MTDPS1; dbSNP:rs121913037." evidence="10">
    <original>G</original>
    <variation>R</variation>
    <location>
        <position position="145"/>
    </location>
</feature>
<feature type="sequence variant" id="VAR_007644" description="In MTDPS1; dbSNP:rs121913038." evidence="10">
    <original>G</original>
    <variation>S</variation>
    <location>
        <position position="153"/>
    </location>
</feature>
<feature type="sequence variant" id="VAR_007645" description="In MTDPS1; dbSNP:rs149977726." evidence="10">
    <original>K</original>
    <variation>R</variation>
    <location>
        <position position="222"/>
    </location>
</feature>
<feature type="sequence variant" id="VAR_007646" description="In MTDPS1; dbSNP:rs121913036." evidence="10">
    <original>E</original>
    <variation>A</variation>
    <location>
        <position position="289"/>
    </location>
</feature>
<feature type="sequence variant" id="VAR_007647" description="In MTDPS1." evidence="10">
    <location>
        <begin position="397"/>
        <end position="398"/>
    </location>
</feature>
<feature type="sequence variant" id="VAR_007648" description="In dbSNP:rs11479." evidence="5 9">
    <original>S</original>
    <variation>L</variation>
    <location>
        <position position="471"/>
    </location>
</feature>
<feature type="mutagenesis site" description="Abolishes catalytic activity." evidence="8">
    <original>Y</original>
    <variation>A</variation>
    <location>
        <position position="199"/>
    </location>
</feature>
<feature type="mutagenesis site" description="Reduced catalytic activity." evidence="8">
    <original>Y</original>
    <variation>F</variation>
    <location>
        <position position="199"/>
    </location>
</feature>
<feature type="mutagenesis site" description="Reduced catalytic activity." evidence="8">
    <original>Y</original>
    <variation>L</variation>
    <location>
        <position position="199"/>
    </location>
</feature>
<feature type="sequence conflict" description="In Ref. 5; AAH18160." evidence="12" ref="5">
    <original>D</original>
    <variation>E</variation>
    <location>
        <position position="195"/>
    </location>
</feature>
<feature type="helix" evidence="15">
    <location>
        <begin position="36"/>
        <end position="44"/>
    </location>
</feature>
<feature type="helix" evidence="15">
    <location>
        <begin position="51"/>
        <end position="63"/>
    </location>
</feature>
<feature type="helix" evidence="15">
    <location>
        <begin position="68"/>
        <end position="81"/>
    </location>
</feature>
<feature type="helix" evidence="15">
    <location>
        <begin position="85"/>
        <end position="96"/>
    </location>
</feature>
<feature type="helix" evidence="15">
    <location>
        <begin position="106"/>
        <end position="111"/>
    </location>
</feature>
<feature type="strand" evidence="15">
    <location>
        <begin position="112"/>
        <end position="118"/>
    </location>
</feature>
<feature type="helix" evidence="15">
    <location>
        <begin position="125"/>
        <end position="134"/>
    </location>
</feature>
<feature type="turn" evidence="15">
    <location>
        <begin position="135"/>
        <end position="137"/>
    </location>
</feature>
<feature type="strand" evidence="15">
    <location>
        <begin position="139"/>
        <end position="143"/>
    </location>
</feature>
<feature type="helix" evidence="15">
    <location>
        <begin position="154"/>
        <end position="158"/>
    </location>
</feature>
<feature type="helix" evidence="15">
    <location>
        <begin position="170"/>
        <end position="180"/>
    </location>
</feature>
<feature type="strand" evidence="15">
    <location>
        <begin position="181"/>
        <end position="185"/>
    </location>
</feature>
<feature type="strand" evidence="15">
    <location>
        <begin position="189"/>
        <end position="192"/>
    </location>
</feature>
<feature type="helix" evidence="15">
    <location>
        <begin position="193"/>
        <end position="204"/>
    </location>
</feature>
<feature type="helix" evidence="15">
    <location>
        <begin position="211"/>
        <end position="224"/>
    </location>
</feature>
<feature type="strand" evidence="15">
    <location>
        <begin position="228"/>
        <end position="236"/>
    </location>
</feature>
<feature type="strand" evidence="16">
    <location>
        <begin position="240"/>
        <end position="244"/>
    </location>
</feature>
<feature type="helix" evidence="15">
    <location>
        <begin position="245"/>
        <end position="261"/>
    </location>
</feature>
<feature type="strand" evidence="15">
    <location>
        <begin position="266"/>
        <end position="272"/>
    </location>
</feature>
<feature type="strand" evidence="15">
    <location>
        <begin position="280"/>
        <end position="283"/>
    </location>
</feature>
<feature type="helix" evidence="15">
    <location>
        <begin position="284"/>
        <end position="294"/>
    </location>
</feature>
<feature type="helix" evidence="15">
    <location>
        <begin position="300"/>
        <end position="316"/>
    </location>
</feature>
<feature type="strand" evidence="16">
    <location>
        <begin position="319"/>
        <end position="322"/>
    </location>
</feature>
<feature type="helix" evidence="15">
    <location>
        <begin position="323"/>
        <end position="335"/>
    </location>
</feature>
<feature type="helix" evidence="15">
    <location>
        <begin position="338"/>
        <end position="349"/>
    </location>
</feature>
<feature type="helix" evidence="15">
    <location>
        <begin position="354"/>
        <end position="362"/>
    </location>
</feature>
<feature type="helix" evidence="15">
    <location>
        <begin position="365"/>
        <end position="371"/>
    </location>
</feature>
<feature type="strand" evidence="15">
    <location>
        <begin position="376"/>
        <end position="382"/>
    </location>
</feature>
<feature type="strand" evidence="15">
    <location>
        <begin position="387"/>
        <end position="392"/>
    </location>
</feature>
<feature type="helix" evidence="15">
    <location>
        <begin position="394"/>
        <end position="405"/>
    </location>
</feature>
<feature type="strand" evidence="17">
    <location>
        <begin position="409"/>
        <end position="412"/>
    </location>
</feature>
<feature type="strand" evidence="15">
    <location>
        <begin position="420"/>
        <end position="423"/>
    </location>
</feature>
<feature type="strand" evidence="15">
    <location>
        <begin position="436"/>
        <end position="446"/>
    </location>
</feature>
<feature type="helix" evidence="15">
    <location>
        <begin position="449"/>
        <end position="458"/>
    </location>
</feature>
<feature type="strand" evidence="15">
    <location>
        <begin position="459"/>
        <end position="464"/>
    </location>
</feature>
<feature type="strand" evidence="15">
    <location>
        <begin position="475"/>
        <end position="477"/>
    </location>
</feature>
<accession>P19971</accession>
<accession>A8MW15</accession>
<accession>H9KVA0</accession>
<accession>Q13390</accession>
<accession>Q8WVB7</accession>
<proteinExistence type="evidence at protein level"/>
<gene>
    <name evidence="14" type="primary">TYMP</name>
    <name type="synonym">ECGF1</name>
</gene>